<organism>
    <name type="scientific">Pectobacterium carotovorum subsp. carotovorum (strain PC1)</name>
    <dbReference type="NCBI Taxonomy" id="561230"/>
    <lineage>
        <taxon>Bacteria</taxon>
        <taxon>Pseudomonadati</taxon>
        <taxon>Pseudomonadota</taxon>
        <taxon>Gammaproteobacteria</taxon>
        <taxon>Enterobacterales</taxon>
        <taxon>Pectobacteriaceae</taxon>
        <taxon>Pectobacterium</taxon>
    </lineage>
</organism>
<reference key="1">
    <citation type="submission" date="2009-07" db="EMBL/GenBank/DDBJ databases">
        <title>Complete sequence of Pectobacterium carotovorum subsp. carotovorum PC1.</title>
        <authorList>
            <consortium name="US DOE Joint Genome Institute"/>
            <person name="Lucas S."/>
            <person name="Copeland A."/>
            <person name="Lapidus A."/>
            <person name="Glavina del Rio T."/>
            <person name="Tice H."/>
            <person name="Bruce D."/>
            <person name="Goodwin L."/>
            <person name="Pitluck S."/>
            <person name="Munk A.C."/>
            <person name="Brettin T."/>
            <person name="Detter J.C."/>
            <person name="Han C."/>
            <person name="Tapia R."/>
            <person name="Larimer F."/>
            <person name="Land M."/>
            <person name="Hauser L."/>
            <person name="Kyrpides N."/>
            <person name="Mikhailova N."/>
            <person name="Balakrishnan V."/>
            <person name="Glasner J."/>
            <person name="Perna N.T."/>
        </authorList>
    </citation>
    <scope>NUCLEOTIDE SEQUENCE [LARGE SCALE GENOMIC DNA]</scope>
    <source>
        <strain>PC1</strain>
    </source>
</reference>
<gene>
    <name type="ordered locus">PC1_3712</name>
</gene>
<feature type="chain" id="PRO_1000212872" description="UPF0301 protein PC1_3712">
    <location>
        <begin position="1"/>
        <end position="187"/>
    </location>
</feature>
<proteinExistence type="inferred from homology"/>
<evidence type="ECO:0000255" key="1">
    <source>
        <dbReference type="HAMAP-Rule" id="MF_00758"/>
    </source>
</evidence>
<protein>
    <recommendedName>
        <fullName evidence="1">UPF0301 protein PC1_3712</fullName>
    </recommendedName>
</protein>
<dbReference type="EMBL" id="CP001657">
    <property type="protein sequence ID" value="ACT14727.1"/>
    <property type="molecule type" value="Genomic_DNA"/>
</dbReference>
<dbReference type="RefSeq" id="WP_015841840.1">
    <property type="nucleotide sequence ID" value="NC_012917.1"/>
</dbReference>
<dbReference type="SMR" id="C6DFI8"/>
<dbReference type="STRING" id="561230.PC1_3712"/>
<dbReference type="KEGG" id="pct:PC1_3712"/>
<dbReference type="eggNOG" id="COG1678">
    <property type="taxonomic scope" value="Bacteria"/>
</dbReference>
<dbReference type="HOGENOM" id="CLU_057596_1_0_6"/>
<dbReference type="OrthoDB" id="9807486at2"/>
<dbReference type="Proteomes" id="UP000002736">
    <property type="component" value="Chromosome"/>
</dbReference>
<dbReference type="GO" id="GO:0005829">
    <property type="term" value="C:cytosol"/>
    <property type="evidence" value="ECO:0007669"/>
    <property type="project" value="TreeGrafter"/>
</dbReference>
<dbReference type="Gene3D" id="3.40.1740.10">
    <property type="entry name" value="VC0467-like"/>
    <property type="match status" value="1"/>
</dbReference>
<dbReference type="HAMAP" id="MF_00758">
    <property type="entry name" value="UPF0301"/>
    <property type="match status" value="1"/>
</dbReference>
<dbReference type="InterPro" id="IPR003774">
    <property type="entry name" value="AlgH-like"/>
</dbReference>
<dbReference type="NCBIfam" id="NF001266">
    <property type="entry name" value="PRK00228.1-1"/>
    <property type="match status" value="1"/>
</dbReference>
<dbReference type="PANTHER" id="PTHR30327">
    <property type="entry name" value="UNCHARACTERIZED PROTEIN YQGE"/>
    <property type="match status" value="1"/>
</dbReference>
<dbReference type="PANTHER" id="PTHR30327:SF1">
    <property type="entry name" value="UPF0301 PROTEIN YQGE"/>
    <property type="match status" value="1"/>
</dbReference>
<dbReference type="Pfam" id="PF02622">
    <property type="entry name" value="DUF179"/>
    <property type="match status" value="1"/>
</dbReference>
<dbReference type="SUPFAM" id="SSF143456">
    <property type="entry name" value="VC0467-like"/>
    <property type="match status" value="1"/>
</dbReference>
<comment type="similarity">
    <text evidence="1">Belongs to the UPF0301 (AlgH) family.</text>
</comment>
<name>Y3712_PECCP</name>
<sequence>MNLQHHFLIAMPALQDSVFKRSVVYICEHNEDGAMGLIINKPMDQFSVENVLKKLKIDPTPRDPAIRLDKPVFMGGPLADDRGFILHTPCPGFGSSISISEDTMITTSKDVLETLGTPSQPENTLVALGYSAWENGQLEEELLENAWLTTPADKDILFHTPIAERWRAAARKLGIDIHNISTEAGHA</sequence>
<accession>C6DFI8</accession>